<sequence length="83" mass="9411">MSGSTGERSFADIITSIRYWIIHSITIPSLFIAGWLFVSTGLAYDVFGSPRPNEYFTESRQGIPLITGRFDPLEQLDEFSRSF</sequence>
<feature type="chain" id="PRO_0000200315" description="Cytochrome b559 subunit alpha">
    <location>
        <begin position="1"/>
        <end position="83"/>
    </location>
</feature>
<feature type="transmembrane region" description="Helical" evidence="1">
    <location>
        <begin position="21"/>
        <end position="35"/>
    </location>
</feature>
<feature type="binding site" description="axial binding residue" evidence="1">
    <location>
        <position position="23"/>
    </location>
    <ligand>
        <name>heme</name>
        <dbReference type="ChEBI" id="CHEBI:30413"/>
        <note>ligand shared with beta subunit</note>
    </ligand>
    <ligandPart>
        <name>Fe</name>
        <dbReference type="ChEBI" id="CHEBI:18248"/>
    </ligandPart>
</feature>
<keyword id="KW-0150">Chloroplast</keyword>
<keyword id="KW-0249">Electron transport</keyword>
<keyword id="KW-0349">Heme</keyword>
<keyword id="KW-0408">Iron</keyword>
<keyword id="KW-0472">Membrane</keyword>
<keyword id="KW-0479">Metal-binding</keyword>
<keyword id="KW-0602">Photosynthesis</keyword>
<keyword id="KW-0604">Photosystem II</keyword>
<keyword id="KW-0934">Plastid</keyword>
<keyword id="KW-0793">Thylakoid</keyword>
<keyword id="KW-0812">Transmembrane</keyword>
<keyword id="KW-1133">Transmembrane helix</keyword>
<keyword id="KW-0813">Transport</keyword>
<organism>
    <name type="scientific">Lotus japonicus</name>
    <name type="common">Lotus corniculatus var. japonicus</name>
    <dbReference type="NCBI Taxonomy" id="34305"/>
    <lineage>
        <taxon>Eukaryota</taxon>
        <taxon>Viridiplantae</taxon>
        <taxon>Streptophyta</taxon>
        <taxon>Embryophyta</taxon>
        <taxon>Tracheophyta</taxon>
        <taxon>Spermatophyta</taxon>
        <taxon>Magnoliopsida</taxon>
        <taxon>eudicotyledons</taxon>
        <taxon>Gunneridae</taxon>
        <taxon>Pentapetalae</taxon>
        <taxon>rosids</taxon>
        <taxon>fabids</taxon>
        <taxon>Fabales</taxon>
        <taxon>Fabaceae</taxon>
        <taxon>Papilionoideae</taxon>
        <taxon>50 kb inversion clade</taxon>
        <taxon>NPAAA clade</taxon>
        <taxon>Hologalegina</taxon>
        <taxon>robinioid clade</taxon>
        <taxon>Loteae</taxon>
        <taxon>Lotus</taxon>
    </lineage>
</organism>
<geneLocation type="chloroplast"/>
<reference key="1">
    <citation type="journal article" date="2000" name="DNA Res.">
        <title>Complete structure of the chloroplast genome of a legume, Lotus japonicus.</title>
        <authorList>
            <person name="Kato T."/>
            <person name="Kaneko T."/>
            <person name="Sato S."/>
            <person name="Nakamura Y."/>
            <person name="Tabata S."/>
        </authorList>
    </citation>
    <scope>NUCLEOTIDE SEQUENCE [LARGE SCALE GENOMIC DNA]</scope>
    <source>
        <strain>cv. Miyakojima MG-20</strain>
    </source>
</reference>
<accession>Q9BBR5</accession>
<dbReference type="EMBL" id="AP002983">
    <property type="protein sequence ID" value="BAB33213.1"/>
    <property type="molecule type" value="Genomic_DNA"/>
</dbReference>
<dbReference type="RefSeq" id="NP_084815.1">
    <property type="nucleotide sequence ID" value="NC_002694.1"/>
</dbReference>
<dbReference type="SMR" id="Q9BBR5"/>
<dbReference type="GeneID" id="802944"/>
<dbReference type="GO" id="GO:0009535">
    <property type="term" value="C:chloroplast thylakoid membrane"/>
    <property type="evidence" value="ECO:0007669"/>
    <property type="project" value="UniProtKB-SubCell"/>
</dbReference>
<dbReference type="GO" id="GO:0009539">
    <property type="term" value="C:photosystem II reaction center"/>
    <property type="evidence" value="ECO:0007669"/>
    <property type="project" value="InterPro"/>
</dbReference>
<dbReference type="GO" id="GO:0009055">
    <property type="term" value="F:electron transfer activity"/>
    <property type="evidence" value="ECO:0007669"/>
    <property type="project" value="UniProtKB-UniRule"/>
</dbReference>
<dbReference type="GO" id="GO:0020037">
    <property type="term" value="F:heme binding"/>
    <property type="evidence" value="ECO:0007669"/>
    <property type="project" value="InterPro"/>
</dbReference>
<dbReference type="GO" id="GO:0005506">
    <property type="term" value="F:iron ion binding"/>
    <property type="evidence" value="ECO:0007669"/>
    <property type="project" value="UniProtKB-UniRule"/>
</dbReference>
<dbReference type="GO" id="GO:0009767">
    <property type="term" value="P:photosynthetic electron transport chain"/>
    <property type="evidence" value="ECO:0007669"/>
    <property type="project" value="InterPro"/>
</dbReference>
<dbReference type="Gene3D" id="1.20.5.860">
    <property type="entry name" value="Photosystem II cytochrome b559, alpha subunit"/>
    <property type="match status" value="1"/>
</dbReference>
<dbReference type="HAMAP" id="MF_00642">
    <property type="entry name" value="PSII_PsbE"/>
    <property type="match status" value="1"/>
</dbReference>
<dbReference type="InterPro" id="IPR006217">
    <property type="entry name" value="PSII_cyt_b559_asu"/>
</dbReference>
<dbReference type="InterPro" id="IPR037025">
    <property type="entry name" value="PSII_cyt_b559_asu_sf"/>
</dbReference>
<dbReference type="InterPro" id="IPR006216">
    <property type="entry name" value="PSII_cyt_b559_CS"/>
</dbReference>
<dbReference type="InterPro" id="IPR013081">
    <property type="entry name" value="PSII_cyt_b559_N"/>
</dbReference>
<dbReference type="InterPro" id="IPR013082">
    <property type="entry name" value="PSII_cytb559_asu_lum"/>
</dbReference>
<dbReference type="NCBIfam" id="TIGR01332">
    <property type="entry name" value="cyt_b559_alpha"/>
    <property type="match status" value="1"/>
</dbReference>
<dbReference type="PANTHER" id="PTHR33391">
    <property type="entry name" value="CYTOCHROME B559 SUBUNIT BETA-RELATED"/>
    <property type="match status" value="1"/>
</dbReference>
<dbReference type="PANTHER" id="PTHR33391:SF9">
    <property type="entry name" value="CYTOCHROME B559 SUBUNIT BETA-RELATED"/>
    <property type="match status" value="1"/>
</dbReference>
<dbReference type="Pfam" id="PF00283">
    <property type="entry name" value="Cytochrom_B559"/>
    <property type="match status" value="1"/>
</dbReference>
<dbReference type="Pfam" id="PF00284">
    <property type="entry name" value="Cytochrom_B559a"/>
    <property type="match status" value="1"/>
</dbReference>
<dbReference type="PIRSF" id="PIRSF000036">
    <property type="entry name" value="PsbE"/>
    <property type="match status" value="1"/>
</dbReference>
<dbReference type="SUPFAM" id="SSF161045">
    <property type="entry name" value="Cytochrome b559 subunits"/>
    <property type="match status" value="1"/>
</dbReference>
<dbReference type="PROSITE" id="PS00537">
    <property type="entry name" value="CYTOCHROME_B559"/>
    <property type="match status" value="1"/>
</dbReference>
<name>PSBE_LOTJA</name>
<proteinExistence type="inferred from homology"/>
<comment type="function">
    <text evidence="1">This b-type cytochrome is tightly associated with the reaction center of photosystem II (PSII). PSII is a light-driven water:plastoquinone oxidoreductase that uses light energy to abstract electrons from H(2)O, generating O(2) and a proton gradient subsequently used for ATP formation. It consists of a core antenna complex that captures photons, and an electron transfer chain that converts photonic excitation into a charge separation.</text>
</comment>
<comment type="cofactor">
    <cofactor evidence="1">
        <name>heme b</name>
        <dbReference type="ChEBI" id="CHEBI:60344"/>
    </cofactor>
    <text evidence="1">With its partner (PsbF) binds heme. PSII binds additional chlorophylls, carotenoids and specific lipids.</text>
</comment>
<comment type="subunit">
    <text evidence="1">Heterodimer of an alpha subunit and a beta subunit. PSII is composed of 1 copy each of membrane proteins PsbA, PsbB, PsbC, PsbD, PsbE, PsbF, PsbH, PsbI, PsbJ, PsbK, PsbL, PsbM, PsbT, PsbX, PsbY, PsbZ, Psb30/Ycf12, at least 3 peripheral proteins of the oxygen-evolving complex and a large number of cofactors. It forms dimeric complexes.</text>
</comment>
<comment type="subcellular location">
    <subcellularLocation>
        <location evidence="1">Plastid</location>
        <location evidence="1">Chloroplast thylakoid membrane</location>
        <topology evidence="1">Single-pass membrane protein</topology>
    </subcellularLocation>
</comment>
<comment type="similarity">
    <text evidence="1">Belongs to the PsbE/PsbF family.</text>
</comment>
<evidence type="ECO:0000255" key="1">
    <source>
        <dbReference type="HAMAP-Rule" id="MF_00642"/>
    </source>
</evidence>
<gene>
    <name evidence="1" type="primary">psbE</name>
</gene>
<protein>
    <recommendedName>
        <fullName evidence="1">Cytochrome b559 subunit alpha</fullName>
    </recommendedName>
    <alternativeName>
        <fullName evidence="1">PSII reaction center subunit V</fullName>
    </alternativeName>
</protein>